<sequence>MPRRREVPKREILPDPKFGNVEVAKFMNVLMLDGKKSVAERIVYGAFDHIEKKANKEPLEIFSTAMGNVKPMVEVKSRRVGGANYQVPVEVRPSRRSALAMRWVREAAKKRGEKSMAQRLANELLEAAEGRGGAMKKREEVHRMAEANKAFSHFRF</sequence>
<protein>
    <recommendedName>
        <fullName evidence="1">Small ribosomal subunit protein uS7</fullName>
    </recommendedName>
    <alternativeName>
        <fullName evidence="2">30S ribosomal protein S7</fullName>
    </alternativeName>
</protein>
<feature type="chain" id="PRO_1000081293" description="Small ribosomal subunit protein uS7">
    <location>
        <begin position="1"/>
        <end position="156"/>
    </location>
</feature>
<comment type="function">
    <text evidence="1">One of the primary rRNA binding proteins, it binds directly to 16S rRNA where it nucleates assembly of the head domain of the 30S subunit. Is located at the subunit interface close to the decoding center, probably blocks exit of the E-site tRNA.</text>
</comment>
<comment type="subunit">
    <text evidence="1">Part of the 30S ribosomal subunit. Contacts proteins S9 and S11.</text>
</comment>
<comment type="similarity">
    <text evidence="1">Belongs to the universal ribosomal protein uS7 family.</text>
</comment>
<name>RS7_POLAQ</name>
<proteinExistence type="inferred from homology"/>
<evidence type="ECO:0000255" key="1">
    <source>
        <dbReference type="HAMAP-Rule" id="MF_00480"/>
    </source>
</evidence>
<evidence type="ECO:0000305" key="2"/>
<keyword id="KW-1185">Reference proteome</keyword>
<keyword id="KW-0687">Ribonucleoprotein</keyword>
<keyword id="KW-0689">Ribosomal protein</keyword>
<keyword id="KW-0694">RNA-binding</keyword>
<keyword id="KW-0699">rRNA-binding</keyword>
<keyword id="KW-0820">tRNA-binding</keyword>
<gene>
    <name evidence="1" type="primary">rpsG</name>
    <name type="ordered locus">Pnuc_0049</name>
</gene>
<dbReference type="EMBL" id="CP000655">
    <property type="protein sequence ID" value="ABP33271.1"/>
    <property type="molecule type" value="Genomic_DNA"/>
</dbReference>
<dbReference type="RefSeq" id="WP_011901897.1">
    <property type="nucleotide sequence ID" value="NC_009379.1"/>
</dbReference>
<dbReference type="SMR" id="A4SUV7"/>
<dbReference type="GeneID" id="66831392"/>
<dbReference type="KEGG" id="pnu:Pnuc_0049"/>
<dbReference type="eggNOG" id="COG0049">
    <property type="taxonomic scope" value="Bacteria"/>
</dbReference>
<dbReference type="HOGENOM" id="CLU_072226_1_1_4"/>
<dbReference type="Proteomes" id="UP000000231">
    <property type="component" value="Chromosome"/>
</dbReference>
<dbReference type="GO" id="GO:0015935">
    <property type="term" value="C:small ribosomal subunit"/>
    <property type="evidence" value="ECO:0007669"/>
    <property type="project" value="InterPro"/>
</dbReference>
<dbReference type="GO" id="GO:0019843">
    <property type="term" value="F:rRNA binding"/>
    <property type="evidence" value="ECO:0007669"/>
    <property type="project" value="UniProtKB-UniRule"/>
</dbReference>
<dbReference type="GO" id="GO:0003735">
    <property type="term" value="F:structural constituent of ribosome"/>
    <property type="evidence" value="ECO:0007669"/>
    <property type="project" value="InterPro"/>
</dbReference>
<dbReference type="GO" id="GO:0000049">
    <property type="term" value="F:tRNA binding"/>
    <property type="evidence" value="ECO:0007669"/>
    <property type="project" value="UniProtKB-UniRule"/>
</dbReference>
<dbReference type="GO" id="GO:0006412">
    <property type="term" value="P:translation"/>
    <property type="evidence" value="ECO:0007669"/>
    <property type="project" value="UniProtKB-UniRule"/>
</dbReference>
<dbReference type="CDD" id="cd14869">
    <property type="entry name" value="uS7_Bacteria"/>
    <property type="match status" value="1"/>
</dbReference>
<dbReference type="FunFam" id="1.10.455.10:FF:000001">
    <property type="entry name" value="30S ribosomal protein S7"/>
    <property type="match status" value="1"/>
</dbReference>
<dbReference type="Gene3D" id="1.10.455.10">
    <property type="entry name" value="Ribosomal protein S7 domain"/>
    <property type="match status" value="1"/>
</dbReference>
<dbReference type="HAMAP" id="MF_00480_B">
    <property type="entry name" value="Ribosomal_uS7_B"/>
    <property type="match status" value="1"/>
</dbReference>
<dbReference type="InterPro" id="IPR000235">
    <property type="entry name" value="Ribosomal_uS7"/>
</dbReference>
<dbReference type="InterPro" id="IPR005717">
    <property type="entry name" value="Ribosomal_uS7_bac/org-type"/>
</dbReference>
<dbReference type="InterPro" id="IPR020606">
    <property type="entry name" value="Ribosomal_uS7_CS"/>
</dbReference>
<dbReference type="InterPro" id="IPR023798">
    <property type="entry name" value="Ribosomal_uS7_dom"/>
</dbReference>
<dbReference type="InterPro" id="IPR036823">
    <property type="entry name" value="Ribosomal_uS7_dom_sf"/>
</dbReference>
<dbReference type="NCBIfam" id="TIGR01029">
    <property type="entry name" value="rpsG_bact"/>
    <property type="match status" value="1"/>
</dbReference>
<dbReference type="PANTHER" id="PTHR11205">
    <property type="entry name" value="RIBOSOMAL PROTEIN S7"/>
    <property type="match status" value="1"/>
</dbReference>
<dbReference type="Pfam" id="PF00177">
    <property type="entry name" value="Ribosomal_S7"/>
    <property type="match status" value="1"/>
</dbReference>
<dbReference type="PIRSF" id="PIRSF002122">
    <property type="entry name" value="RPS7p_RPS7a_RPS5e_RPS7o"/>
    <property type="match status" value="1"/>
</dbReference>
<dbReference type="SUPFAM" id="SSF47973">
    <property type="entry name" value="Ribosomal protein S7"/>
    <property type="match status" value="1"/>
</dbReference>
<dbReference type="PROSITE" id="PS00052">
    <property type="entry name" value="RIBOSOMAL_S7"/>
    <property type="match status" value="1"/>
</dbReference>
<reference key="1">
    <citation type="journal article" date="2012" name="Stand. Genomic Sci.">
        <title>Complete genome sequence of Polynucleobacter necessarius subsp. asymbioticus type strain (QLW-P1DMWA-1(T)).</title>
        <authorList>
            <person name="Meincke L."/>
            <person name="Copeland A."/>
            <person name="Lapidus A."/>
            <person name="Lucas S."/>
            <person name="Berry K.W."/>
            <person name="Del Rio T.G."/>
            <person name="Hammon N."/>
            <person name="Dalin E."/>
            <person name="Tice H."/>
            <person name="Pitluck S."/>
            <person name="Richardson P."/>
            <person name="Bruce D."/>
            <person name="Goodwin L."/>
            <person name="Han C."/>
            <person name="Tapia R."/>
            <person name="Detter J.C."/>
            <person name="Schmutz J."/>
            <person name="Brettin T."/>
            <person name="Larimer F."/>
            <person name="Land M."/>
            <person name="Hauser L."/>
            <person name="Kyrpides N.C."/>
            <person name="Ivanova N."/>
            <person name="Goker M."/>
            <person name="Woyke T."/>
            <person name="Wu Q.L."/>
            <person name="Pockl M."/>
            <person name="Hahn M.W."/>
            <person name="Klenk H.P."/>
        </authorList>
    </citation>
    <scope>NUCLEOTIDE SEQUENCE [LARGE SCALE GENOMIC DNA]</scope>
    <source>
        <strain>DSM 18221 / CIP 109841 / QLW-P1DMWA-1</strain>
    </source>
</reference>
<accession>A4SUV7</accession>
<organism>
    <name type="scientific">Polynucleobacter asymbioticus (strain DSM 18221 / CIP 109841 / QLW-P1DMWA-1)</name>
    <name type="common">Polynucleobacter necessarius subsp. asymbioticus</name>
    <dbReference type="NCBI Taxonomy" id="312153"/>
    <lineage>
        <taxon>Bacteria</taxon>
        <taxon>Pseudomonadati</taxon>
        <taxon>Pseudomonadota</taxon>
        <taxon>Betaproteobacteria</taxon>
        <taxon>Burkholderiales</taxon>
        <taxon>Burkholderiaceae</taxon>
        <taxon>Polynucleobacter</taxon>
    </lineage>
</organism>